<feature type="chain" id="PRO_0000223080" description="Uncharacterized protein ECU01_0030">
    <location>
        <begin position="1"/>
        <end position="123"/>
    </location>
</feature>
<feature type="region of interest" description="Disordered" evidence="1">
    <location>
        <begin position="89"/>
        <end position="123"/>
    </location>
</feature>
<feature type="compositionally biased region" description="Polar residues" evidence="1">
    <location>
        <begin position="98"/>
        <end position="109"/>
    </location>
</feature>
<name>Y103_ENCCU</name>
<protein>
    <recommendedName>
        <fullName>Uncharacterized protein ECU01_0030</fullName>
    </recommendedName>
</protein>
<accession>Q8STG1</accession>
<evidence type="ECO:0000256" key="1">
    <source>
        <dbReference type="SAM" id="MobiDB-lite"/>
    </source>
</evidence>
<gene>
    <name type="ordered locus">ECU01_0030</name>
</gene>
<gene>
    <name type="ordered locus">ECU01_1580</name>
</gene>
<gene>
    <name type="ordered locus">ECU04_0040</name>
</gene>
<gene>
    <name type="ordered locus">ECU05_0010</name>
</gene>
<gene>
    <name type="ordered locus">ECU08_2140</name>
</gene>
<gene>
    <name type="ordered locus">ECU10_1890</name>
</gene>
<keyword id="KW-1185">Reference proteome</keyword>
<reference key="1">
    <citation type="journal article" date="2001" name="Genome Res.">
        <title>Sequence and analysis of chromosome I of the amitochondriate intracellular parasite Encephalitozoon cuniculi (Microspora).</title>
        <authorList>
            <person name="Peyret P."/>
            <person name="Katinka M.D."/>
            <person name="Duprat S."/>
            <person name="Duffieux F."/>
            <person name="Barbe V."/>
            <person name="Barbazanges M."/>
            <person name="Weissenbach J."/>
            <person name="Saurin W."/>
            <person name="Vivares C.P."/>
        </authorList>
    </citation>
    <scope>NUCLEOTIDE SEQUENCE [LARGE SCALE GENOMIC DNA]</scope>
    <source>
        <strain>GB-M1</strain>
    </source>
</reference>
<reference key="2">
    <citation type="journal article" date="2001" name="Nature">
        <title>Genome sequence and gene compaction of the eukaryote parasite Encephalitozoon cuniculi.</title>
        <authorList>
            <person name="Katinka M.D."/>
            <person name="Duprat S."/>
            <person name="Cornillot E."/>
            <person name="Metenier G."/>
            <person name="Thomarat F."/>
            <person name="Prensier G."/>
            <person name="Barbe V."/>
            <person name="Peyretaillade E."/>
            <person name="Brottier P."/>
            <person name="Wincker P."/>
            <person name="Delbac F."/>
            <person name="El Alaoui H."/>
            <person name="Peyret P."/>
            <person name="Saurin W."/>
            <person name="Gouy M."/>
            <person name="Weissenbach J."/>
            <person name="Vivares C.P."/>
        </authorList>
    </citation>
    <scope>NUCLEOTIDE SEQUENCE [LARGE SCALE GENOMIC DNA]</scope>
    <source>
        <strain>GB-M1</strain>
    </source>
</reference>
<sequence length="123" mass="13491">MDVCTITGMTARGRLRVSRSSRWCWVQGGGMYMATRLGCIQREMCEGAVSGLWEEGEDGGTRTQMGKRAREVGLEEGVLLLWRTLDLGGVGGRKLGSEGQSLSENSEQRSLMRWGCGGSSERR</sequence>
<proteinExistence type="predicted"/>
<dbReference type="EMBL" id="AL391737">
    <property type="protein sequence ID" value="CAD24875.1"/>
    <property type="molecule type" value="Genomic_DNA"/>
</dbReference>
<dbReference type="EMBL" id="AL391737">
    <property type="protein sequence ID" value="CAD25029.1"/>
    <property type="molecule type" value="Genomic_DNA"/>
</dbReference>
<dbReference type="EMBL" id="AL590444">
    <property type="protein sequence ID" value="CAD25191.1"/>
    <property type="molecule type" value="Genomic_DNA"/>
</dbReference>
<dbReference type="EMBL" id="AL590445">
    <property type="protein sequence ID" value="CAD26518.1"/>
    <property type="molecule type" value="Genomic_DNA"/>
</dbReference>
<dbReference type="EMBL" id="AL590448">
    <property type="protein sequence ID" value="CAD26516.1"/>
    <property type="molecule type" value="Genomic_DNA"/>
</dbReference>
<dbReference type="EMBL" id="AL590449">
    <property type="protein sequence ID" value="CAD25910.1"/>
    <property type="molecule type" value="Genomic_DNA"/>
</dbReference>
<dbReference type="RefSeq" id="NP_001402091.1">
    <property type="nucleotide sequence ID" value="NM_001415398.1"/>
</dbReference>
<dbReference type="RefSeq" id="NP_584687.1">
    <property type="nucleotide sequence ID" value="NM_001041037.1"/>
</dbReference>
<dbReference type="RefSeq" id="NP_586306.1">
    <property type="nucleotide sequence ID" value="NM_001042139.1"/>
</dbReference>
<dbReference type="RefSeq" id="NP_597340.1">
    <property type="nucleotide sequence ID" value="NM_001041949.1"/>
</dbReference>
<dbReference type="RefSeq" id="NP_597341.1">
    <property type="nucleotide sequence ID" value="NM_001041207.1"/>
</dbReference>
<dbReference type="RefSeq" id="XP_965840.1">
    <property type="nucleotide sequence ID" value="XM_960747.1"/>
</dbReference>
<dbReference type="RefSeq" id="XP_965994.1">
    <property type="nucleotide sequence ID" value="XM_960901.1"/>
</dbReference>
<dbReference type="GeneID" id="858835"/>
<dbReference type="GeneID" id="859005"/>
<dbReference type="GeneID" id="859762"/>
<dbReference type="GeneID" id="859957"/>
<dbReference type="GeneID" id="860176"/>
<dbReference type="KEGG" id="ecu:ECU04_0040"/>
<dbReference type="KEGG" id="ecu:ECU05_0010"/>
<dbReference type="KEGG" id="ecu:ECU08_2140"/>
<dbReference type="KEGG" id="ecu:ECU10_1890"/>
<dbReference type="VEuPathDB" id="MicrosporidiaDB:ECU01_0030"/>
<dbReference type="VEuPathDB" id="MicrosporidiaDB:ECU01_1580"/>
<dbReference type="VEuPathDB" id="MicrosporidiaDB:ECU04_0040"/>
<dbReference type="VEuPathDB" id="MicrosporidiaDB:ECU05_0010"/>
<dbReference type="VEuPathDB" id="MicrosporidiaDB:ECU08_2140"/>
<dbReference type="VEuPathDB" id="MicrosporidiaDB:ECU10_1890"/>
<dbReference type="HOGENOM" id="CLU_2015246_0_0_1"/>
<dbReference type="InParanoid" id="Q8STG1"/>
<dbReference type="OrthoDB" id="5609142at2759"/>
<dbReference type="Proteomes" id="UP000000819">
    <property type="component" value="Chromosome I"/>
</dbReference>
<dbReference type="Proteomes" id="UP000000819">
    <property type="component" value="Chromosome IV"/>
</dbReference>
<dbReference type="Proteomes" id="UP000000819">
    <property type="component" value="Chromosome V"/>
</dbReference>
<dbReference type="Proteomes" id="UP000000819">
    <property type="component" value="Chromosome VIII"/>
</dbReference>
<dbReference type="Proteomes" id="UP000000819">
    <property type="component" value="Chromosome X"/>
</dbReference>
<organism>
    <name type="scientific">Encephalitozoon cuniculi (strain GB-M1)</name>
    <name type="common">Microsporidian parasite</name>
    <dbReference type="NCBI Taxonomy" id="284813"/>
    <lineage>
        <taxon>Eukaryota</taxon>
        <taxon>Fungi</taxon>
        <taxon>Fungi incertae sedis</taxon>
        <taxon>Microsporidia</taxon>
        <taxon>Unikaryonidae</taxon>
        <taxon>Encephalitozoon</taxon>
    </lineage>
</organism>